<evidence type="ECO:0000250" key="1">
    <source>
        <dbReference type="UniProtKB" id="Q0P9D1"/>
    </source>
</evidence>
<evidence type="ECO:0000269" key="2">
    <source>
    </source>
</evidence>
<evidence type="ECO:0000303" key="3">
    <source>
    </source>
</evidence>
<evidence type="ECO:0000305" key="4"/>
<evidence type="ECO:0000312" key="5">
    <source>
        <dbReference type="EMBL" id="AAG57089.1"/>
    </source>
</evidence>
<evidence type="ECO:0000312" key="6">
    <source>
        <dbReference type="EMBL" id="BAB36254.1"/>
    </source>
</evidence>
<reference key="1">
    <citation type="journal article" date="2001" name="DNA Res.">
        <title>Complete genome sequence of enterohemorrhagic Escherichia coli O157:H7 and genomic comparison with a laboratory strain K-12.</title>
        <authorList>
            <person name="Hayashi T."/>
            <person name="Makino K."/>
            <person name="Ohnishi M."/>
            <person name="Kurokawa K."/>
            <person name="Ishii K."/>
            <person name="Yokoyama K."/>
            <person name="Han C.-G."/>
            <person name="Ohtsubo E."/>
            <person name="Nakayama K."/>
            <person name="Murata T."/>
            <person name="Tanaka M."/>
            <person name="Tobe T."/>
            <person name="Iida T."/>
            <person name="Takami H."/>
            <person name="Honda T."/>
            <person name="Sasakawa C."/>
            <person name="Ogasawara N."/>
            <person name="Yasunaga T."/>
            <person name="Kuhara S."/>
            <person name="Shiba T."/>
            <person name="Hattori M."/>
            <person name="Shinagawa H."/>
        </authorList>
    </citation>
    <scope>NUCLEOTIDE SEQUENCE [LARGE SCALE GENOMIC DNA]</scope>
    <source>
        <strain>O157:H7 / Sakai / RIMD 0509952 / EHEC</strain>
    </source>
</reference>
<reference key="2">
    <citation type="journal article" date="2001" name="Nature">
        <title>Genome sequence of enterohaemorrhagic Escherichia coli O157:H7.</title>
        <authorList>
            <person name="Perna N.T."/>
            <person name="Plunkett G. III"/>
            <person name="Burland V."/>
            <person name="Mau B."/>
            <person name="Glasner J.D."/>
            <person name="Rose D.J."/>
            <person name="Mayhew G.F."/>
            <person name="Evans P.S."/>
            <person name="Gregor J."/>
            <person name="Kirkpatrick H.A."/>
            <person name="Posfai G."/>
            <person name="Hackett J."/>
            <person name="Klink S."/>
            <person name="Boutin A."/>
            <person name="Shao Y."/>
            <person name="Miller L."/>
            <person name="Grotbeck E.J."/>
            <person name="Davis N.W."/>
            <person name="Lim A."/>
            <person name="Dimalanta E.T."/>
            <person name="Potamousis K."/>
            <person name="Apodaca J."/>
            <person name="Anantharaman T.S."/>
            <person name="Lin J."/>
            <person name="Yen G."/>
            <person name="Schwartz D.C."/>
            <person name="Welch R.A."/>
            <person name="Blattner F.R."/>
        </authorList>
    </citation>
    <scope>NUCLEOTIDE SEQUENCE [LARGE SCALE GENOMIC DNA]</scope>
    <source>
        <strain>O157:H7 / EDL933 / ATCC 700927 / EHEC</strain>
    </source>
</reference>
<reference key="3">
    <citation type="journal article" date="2008" name="FEBS Lett.">
        <title>Identification of the GDP-N-acetyl-d-perosamine producing enzymes from Escherichia coli O157:H7.</title>
        <authorList>
            <person name="Albermann C."/>
            <person name="Beuttler H."/>
        </authorList>
    </citation>
    <scope>FUNCTION</scope>
    <scope>CATALYTIC ACTIVITY</scope>
    <scope>BIOPHYSICOCHEMICAL PROPERTIES</scope>
    <scope>PATHWAY</scope>
    <scope>SUBUNIT</scope>
    <source>
        <strain>O157:H7 / EHEC</strain>
    </source>
</reference>
<name>PERB_ECO57</name>
<comment type="function">
    <text evidence="2">Catalyzes the transfer of an acetyl residue from acetyl-CoA onto GDP-perosamine to form GDP-N-acetyl-perosamine.</text>
</comment>
<comment type="catalytic activity">
    <reaction evidence="2">
        <text>GDP-alpha-D-perosamine + acetyl-CoA = GDP-N-acetyl-alpha-D-perosamine + CoA + H(+)</text>
        <dbReference type="Rhea" id="RHEA:36811"/>
        <dbReference type="ChEBI" id="CHEBI:15378"/>
        <dbReference type="ChEBI" id="CHEBI:57287"/>
        <dbReference type="ChEBI" id="CHEBI:57288"/>
        <dbReference type="ChEBI" id="CHEBI:73996"/>
        <dbReference type="ChEBI" id="CHEBI:73997"/>
        <dbReference type="EC" id="2.3.1.227"/>
    </reaction>
</comment>
<comment type="biophysicochemical properties">
    <kinetics>
        <KM evidence="2">0.32 mM for GDP-perosamine</KM>
        <KM evidence="2">1.8 mM for acetyl-CoA</KM>
    </kinetics>
    <phDependence>
        <text evidence="2">Optimum pH is 8.5.</text>
    </phDependence>
</comment>
<comment type="pathway">
    <text evidence="3">Bacterial outer membrane biogenesis; LPS O-antigen biosynthesis.</text>
</comment>
<comment type="subunit">
    <text evidence="2">Homotrimer.</text>
</comment>
<comment type="similarity">
    <text evidence="4">Belongs to the transferase hexapeptide repeat family.</text>
</comment>
<gene>
    <name evidence="3" type="primary">perB</name>
    <name evidence="5" type="synonym">wbdR</name>
    <name evidence="6" type="ordered locus">ECs2831</name>
    <name evidence="5" type="ordered locus">Z3192</name>
</gene>
<feature type="chain" id="PRO_0000430722" description="GDP-perosamine N-acetyltransferase">
    <location>
        <begin position="1"/>
        <end position="221"/>
    </location>
</feature>
<feature type="active site" description="Proton acceptor" evidence="1">
    <location>
        <position position="139"/>
    </location>
</feature>
<accession>Q7DBF7</accession>
<accession>Q7ACQ5</accession>
<proteinExistence type="evidence at protein level"/>
<dbReference type="EC" id="2.3.1.227" evidence="2"/>
<dbReference type="EMBL" id="AE005174">
    <property type="protein sequence ID" value="AAG57089.1"/>
    <property type="molecule type" value="Genomic_DNA"/>
</dbReference>
<dbReference type="EMBL" id="BA000007">
    <property type="protein sequence ID" value="BAB36254.1"/>
    <property type="molecule type" value="Genomic_DNA"/>
</dbReference>
<dbReference type="RefSeq" id="WP_001055391.1">
    <property type="nucleotide sequence ID" value="NZ_VOAI01000013.1"/>
</dbReference>
<dbReference type="SMR" id="Q7DBF7"/>
<dbReference type="STRING" id="155864.Z3192"/>
<dbReference type="KEGG" id="ece:Z3192"/>
<dbReference type="KEGG" id="ecs:ECs_2831"/>
<dbReference type="PATRIC" id="fig|83334.175.peg.946"/>
<dbReference type="HOGENOM" id="CLU_081811_1_1_6"/>
<dbReference type="OMA" id="GAHCIIN"/>
<dbReference type="BioCyc" id="MetaCyc:MONOMER-21546"/>
<dbReference type="UniPathway" id="UPA00281"/>
<dbReference type="Proteomes" id="UP000000558">
    <property type="component" value="Chromosome"/>
</dbReference>
<dbReference type="Proteomes" id="UP000002519">
    <property type="component" value="Chromosome"/>
</dbReference>
<dbReference type="GO" id="GO:0016746">
    <property type="term" value="F:acyltransferase activity"/>
    <property type="evidence" value="ECO:0007669"/>
    <property type="project" value="UniProtKB-KW"/>
</dbReference>
<dbReference type="GO" id="GO:0009243">
    <property type="term" value="P:O antigen biosynthetic process"/>
    <property type="evidence" value="ECO:0007669"/>
    <property type="project" value="UniProtKB-UniPathway"/>
</dbReference>
<dbReference type="CDD" id="cd03360">
    <property type="entry name" value="LbH_AT_putative"/>
    <property type="match status" value="1"/>
</dbReference>
<dbReference type="Gene3D" id="3.40.50.20">
    <property type="match status" value="1"/>
</dbReference>
<dbReference type="Gene3D" id="2.160.10.10">
    <property type="entry name" value="Hexapeptide repeat proteins"/>
    <property type="match status" value="1"/>
</dbReference>
<dbReference type="InterPro" id="IPR020019">
    <property type="entry name" value="AcTrfase_PglD-like"/>
</dbReference>
<dbReference type="InterPro" id="IPR001451">
    <property type="entry name" value="Hexapep"/>
</dbReference>
<dbReference type="InterPro" id="IPR041561">
    <property type="entry name" value="PglD_N"/>
</dbReference>
<dbReference type="InterPro" id="IPR050179">
    <property type="entry name" value="Trans_hexapeptide_repeat"/>
</dbReference>
<dbReference type="InterPro" id="IPR011004">
    <property type="entry name" value="Trimer_LpxA-like_sf"/>
</dbReference>
<dbReference type="NCBIfam" id="TIGR03570">
    <property type="entry name" value="NeuD_NnaD"/>
    <property type="match status" value="1"/>
</dbReference>
<dbReference type="PANTHER" id="PTHR43300">
    <property type="entry name" value="ACETYLTRANSFERASE"/>
    <property type="match status" value="1"/>
</dbReference>
<dbReference type="PANTHER" id="PTHR43300:SF7">
    <property type="entry name" value="UDP-N-ACETYLBACILLOSAMINE N-ACETYLTRANSFERASE"/>
    <property type="match status" value="1"/>
</dbReference>
<dbReference type="Pfam" id="PF14602">
    <property type="entry name" value="Hexapep_2"/>
    <property type="match status" value="1"/>
</dbReference>
<dbReference type="Pfam" id="PF17836">
    <property type="entry name" value="PglD_N"/>
    <property type="match status" value="1"/>
</dbReference>
<dbReference type="SUPFAM" id="SSF51161">
    <property type="entry name" value="Trimeric LpxA-like enzymes"/>
    <property type="match status" value="1"/>
</dbReference>
<protein>
    <recommendedName>
        <fullName evidence="3">GDP-perosamine N-acetyltransferase</fullName>
        <ecNumber evidence="2">2.3.1.227</ecNumber>
    </recommendedName>
</protein>
<organism>
    <name type="scientific">Escherichia coli O157:H7</name>
    <dbReference type="NCBI Taxonomy" id="83334"/>
    <lineage>
        <taxon>Bacteria</taxon>
        <taxon>Pseudomonadati</taxon>
        <taxon>Pseudomonadota</taxon>
        <taxon>Gammaproteobacteria</taxon>
        <taxon>Enterobacterales</taxon>
        <taxon>Enterobacteriaceae</taxon>
        <taxon>Escherichia</taxon>
    </lineage>
</organism>
<keyword id="KW-0012">Acyltransferase</keyword>
<keyword id="KW-0448">Lipopolysaccharide biosynthesis</keyword>
<keyword id="KW-1185">Reference proteome</keyword>
<keyword id="KW-0808">Transferase</keyword>
<sequence length="221" mass="23742">MNLYGIFGAGSYGRETIPILNQQIKQECGSDYALVFVDDVLAGKKVNGFEVLSTNCFLKAPYLKKYFNVAIANDKIRQRVSESILLHGVEPITIKHPNSVVYDHTMIGSGAIISPFVTISTNTHIGRFFHANIYSYVAHDCQIGDYVTFAPGAKCNGYVVIEDNAYIGSGAVIKQGVPNRPLIIGAGAIIGMGAVVTKSVPAGITVCGNPAREMKRSPTSI</sequence>